<dbReference type="EC" id="2.7.11.5" evidence="1"/>
<dbReference type="EC" id="3.1.3.-" evidence="1"/>
<dbReference type="EMBL" id="AE005174">
    <property type="protein sequence ID" value="AAG59208.1"/>
    <property type="molecule type" value="Genomic_DNA"/>
</dbReference>
<dbReference type="EMBL" id="BA000007">
    <property type="protein sequence ID" value="BAB38357.1"/>
    <property type="molecule type" value="Genomic_DNA"/>
</dbReference>
<dbReference type="PIR" id="D86093">
    <property type="entry name" value="D86093"/>
</dbReference>
<dbReference type="PIR" id="F91245">
    <property type="entry name" value="F91245"/>
</dbReference>
<dbReference type="RefSeq" id="NP_312961.1">
    <property type="nucleotide sequence ID" value="NC_002695.1"/>
</dbReference>
<dbReference type="RefSeq" id="WP_001137245.1">
    <property type="nucleotide sequence ID" value="NZ_VOAI01000027.1"/>
</dbReference>
<dbReference type="PDB" id="3EPS">
    <property type="method" value="X-ray"/>
    <property type="resolution" value="2.80 A"/>
    <property type="chains" value="A/B=2-578"/>
</dbReference>
<dbReference type="PDB" id="3LC6">
    <property type="method" value="X-ray"/>
    <property type="resolution" value="3.10 A"/>
    <property type="chains" value="A/B=1-578"/>
</dbReference>
<dbReference type="PDB" id="3LCB">
    <property type="method" value="X-ray"/>
    <property type="resolution" value="2.90 A"/>
    <property type="chains" value="A/B=1-578"/>
</dbReference>
<dbReference type="PDB" id="4P69">
    <property type="method" value="X-ray"/>
    <property type="resolution" value="3.30 A"/>
    <property type="chains" value="A/B=4-571"/>
</dbReference>
<dbReference type="PDBsum" id="3EPS"/>
<dbReference type="PDBsum" id="3LC6"/>
<dbReference type="PDBsum" id="3LCB"/>
<dbReference type="PDBsum" id="4P69"/>
<dbReference type="SMR" id="Q8X607"/>
<dbReference type="STRING" id="155864.Z5602"/>
<dbReference type="GeneID" id="914849"/>
<dbReference type="KEGG" id="ece:Z5602"/>
<dbReference type="KEGG" id="ecs:ECs_4934"/>
<dbReference type="PATRIC" id="fig|386585.9.peg.5161"/>
<dbReference type="eggNOG" id="COG4579">
    <property type="taxonomic scope" value="Bacteria"/>
</dbReference>
<dbReference type="HOGENOM" id="CLU_033804_1_1_6"/>
<dbReference type="OMA" id="EPWYSVG"/>
<dbReference type="BRENDA" id="2.7.11.5">
    <property type="organism ID" value="2026"/>
</dbReference>
<dbReference type="EvolutionaryTrace" id="Q8X607"/>
<dbReference type="Proteomes" id="UP000000558">
    <property type="component" value="Chromosome"/>
</dbReference>
<dbReference type="Proteomes" id="UP000002519">
    <property type="component" value="Chromosome"/>
</dbReference>
<dbReference type="GO" id="GO:0005737">
    <property type="term" value="C:cytoplasm"/>
    <property type="evidence" value="ECO:0007669"/>
    <property type="project" value="UniProtKB-SubCell"/>
</dbReference>
<dbReference type="GO" id="GO:0008772">
    <property type="term" value="F:[isocitrate dehydrogenase (NADP+)] kinase activity"/>
    <property type="evidence" value="ECO:0007669"/>
    <property type="project" value="UniProtKB-UniRule"/>
</dbReference>
<dbReference type="GO" id="GO:0016208">
    <property type="term" value="F:AMP binding"/>
    <property type="evidence" value="ECO:0007669"/>
    <property type="project" value="TreeGrafter"/>
</dbReference>
<dbReference type="GO" id="GO:0005524">
    <property type="term" value="F:ATP binding"/>
    <property type="evidence" value="ECO:0007669"/>
    <property type="project" value="UniProtKB-UniRule"/>
</dbReference>
<dbReference type="GO" id="GO:0004721">
    <property type="term" value="F:phosphoprotein phosphatase activity"/>
    <property type="evidence" value="ECO:0007669"/>
    <property type="project" value="UniProtKB-KW"/>
</dbReference>
<dbReference type="GO" id="GO:0004674">
    <property type="term" value="F:protein serine/threonine kinase activity"/>
    <property type="evidence" value="ECO:0007669"/>
    <property type="project" value="UniProtKB-KW"/>
</dbReference>
<dbReference type="GO" id="GO:0006006">
    <property type="term" value="P:glucose metabolic process"/>
    <property type="evidence" value="ECO:0007669"/>
    <property type="project" value="InterPro"/>
</dbReference>
<dbReference type="GO" id="GO:0006097">
    <property type="term" value="P:glyoxylate cycle"/>
    <property type="evidence" value="ECO:0007669"/>
    <property type="project" value="UniProtKB-UniRule"/>
</dbReference>
<dbReference type="GO" id="GO:0006099">
    <property type="term" value="P:tricarboxylic acid cycle"/>
    <property type="evidence" value="ECO:0007669"/>
    <property type="project" value="UniProtKB-UniRule"/>
</dbReference>
<dbReference type="HAMAP" id="MF_00747">
    <property type="entry name" value="AceK"/>
    <property type="match status" value="1"/>
</dbReference>
<dbReference type="InterPro" id="IPR046855">
    <property type="entry name" value="AceK_kinase"/>
</dbReference>
<dbReference type="InterPro" id="IPR046854">
    <property type="entry name" value="AceK_regulatory"/>
</dbReference>
<dbReference type="InterPro" id="IPR010452">
    <property type="entry name" value="Isocitrate_DH_AceK"/>
</dbReference>
<dbReference type="NCBIfam" id="NF002804">
    <property type="entry name" value="PRK02946.1"/>
    <property type="match status" value="1"/>
</dbReference>
<dbReference type="PANTHER" id="PTHR39559">
    <property type="match status" value="1"/>
</dbReference>
<dbReference type="PANTHER" id="PTHR39559:SF1">
    <property type="entry name" value="ISOCITRATE DEHYDROGENASE KINASE_PHOSPHATASE"/>
    <property type="match status" value="1"/>
</dbReference>
<dbReference type="Pfam" id="PF06315">
    <property type="entry name" value="AceK_kinase"/>
    <property type="match status" value="1"/>
</dbReference>
<dbReference type="Pfam" id="PF20423">
    <property type="entry name" value="AceK_regulatory"/>
    <property type="match status" value="1"/>
</dbReference>
<dbReference type="PIRSF" id="PIRSF000719">
    <property type="entry name" value="AceK"/>
    <property type="match status" value="1"/>
</dbReference>
<accession>Q8X607</accession>
<name>ACEK_ECO57</name>
<proteinExistence type="evidence at protein level"/>
<keyword id="KW-0002">3D-structure</keyword>
<keyword id="KW-0067">ATP-binding</keyword>
<keyword id="KW-0963">Cytoplasm</keyword>
<keyword id="KW-0329">Glyoxylate bypass</keyword>
<keyword id="KW-0378">Hydrolase</keyword>
<keyword id="KW-0418">Kinase</keyword>
<keyword id="KW-0547">Nucleotide-binding</keyword>
<keyword id="KW-0904">Protein phosphatase</keyword>
<keyword id="KW-1185">Reference proteome</keyword>
<keyword id="KW-0723">Serine/threonine-protein kinase</keyword>
<keyword id="KW-0808">Transferase</keyword>
<keyword id="KW-0816">Tricarboxylic acid cycle</keyword>
<evidence type="ECO:0000255" key="1">
    <source>
        <dbReference type="HAMAP-Rule" id="MF_00747"/>
    </source>
</evidence>
<evidence type="ECO:0007829" key="2">
    <source>
        <dbReference type="PDB" id="3EPS"/>
    </source>
</evidence>
<evidence type="ECO:0007829" key="3">
    <source>
        <dbReference type="PDB" id="3LCB"/>
    </source>
</evidence>
<organism>
    <name type="scientific">Escherichia coli O157:H7</name>
    <dbReference type="NCBI Taxonomy" id="83334"/>
    <lineage>
        <taxon>Bacteria</taxon>
        <taxon>Pseudomonadati</taxon>
        <taxon>Pseudomonadota</taxon>
        <taxon>Gammaproteobacteria</taxon>
        <taxon>Enterobacterales</taxon>
        <taxon>Enterobacteriaceae</taxon>
        <taxon>Escherichia</taxon>
    </lineage>
</organism>
<protein>
    <recommendedName>
        <fullName evidence="1">Isocitrate dehydrogenase kinase/phosphatase</fullName>
        <shortName evidence="1">IDH kinase/phosphatase</shortName>
        <shortName evidence="1">IDHK/P</shortName>
        <ecNumber evidence="1">2.7.11.5</ecNumber>
        <ecNumber evidence="1">3.1.3.-</ecNumber>
    </recommendedName>
</protein>
<comment type="function">
    <text evidence="1">Bifunctional enzyme which can phosphorylate or dephosphorylate isocitrate dehydrogenase (IDH) on a specific serine residue. This is a regulatory mechanism which enables bacteria to bypass the Krebs cycle via the glyoxylate shunt in response to the source of carbon. When bacteria are grown on glucose, IDH is fully active and unphosphorylated, but when grown on acetate or ethanol, the activity of IDH declines drastically concomitant with its phosphorylation.</text>
</comment>
<comment type="catalytic activity">
    <reaction evidence="1">
        <text>L-seryl-[isocitrate dehydrogenase] + ATP = O-phospho-L-seryl-[isocitrate dehydrogenase] + ADP + H(+)</text>
        <dbReference type="Rhea" id="RHEA:43540"/>
        <dbReference type="Rhea" id="RHEA-COMP:10605"/>
        <dbReference type="Rhea" id="RHEA-COMP:10606"/>
        <dbReference type="ChEBI" id="CHEBI:15378"/>
        <dbReference type="ChEBI" id="CHEBI:29999"/>
        <dbReference type="ChEBI" id="CHEBI:30616"/>
        <dbReference type="ChEBI" id="CHEBI:83421"/>
        <dbReference type="ChEBI" id="CHEBI:456216"/>
        <dbReference type="EC" id="2.7.11.5"/>
    </reaction>
</comment>
<comment type="subcellular location">
    <subcellularLocation>
        <location evidence="1">Cytoplasm</location>
    </subcellularLocation>
</comment>
<comment type="similarity">
    <text evidence="1">Belongs to the AceK family.</text>
</comment>
<feature type="chain" id="PRO_0000057900" description="Isocitrate dehydrogenase kinase/phosphatase">
    <location>
        <begin position="1"/>
        <end position="578"/>
    </location>
</feature>
<feature type="active site" evidence="1">
    <location>
        <position position="371"/>
    </location>
</feature>
<feature type="binding site" evidence="1">
    <location>
        <begin position="315"/>
        <end position="321"/>
    </location>
    <ligand>
        <name>ATP</name>
        <dbReference type="ChEBI" id="CHEBI:30616"/>
    </ligand>
</feature>
<feature type="binding site" evidence="1">
    <location>
        <position position="336"/>
    </location>
    <ligand>
        <name>ATP</name>
        <dbReference type="ChEBI" id="CHEBI:30616"/>
    </ligand>
</feature>
<feature type="helix" evidence="2">
    <location>
        <begin position="3"/>
        <end position="28"/>
    </location>
</feature>
<feature type="helix" evidence="2">
    <location>
        <begin position="31"/>
        <end position="36"/>
    </location>
</feature>
<feature type="helix" evidence="2">
    <location>
        <begin position="40"/>
        <end position="67"/>
    </location>
</feature>
<feature type="turn" evidence="2">
    <location>
        <begin position="71"/>
        <end position="74"/>
    </location>
</feature>
<feature type="helix" evidence="2">
    <location>
        <begin position="76"/>
        <end position="87"/>
    </location>
</feature>
<feature type="turn" evidence="2">
    <location>
        <begin position="88"/>
        <end position="92"/>
    </location>
</feature>
<feature type="helix" evidence="2">
    <location>
        <begin position="96"/>
        <end position="110"/>
    </location>
</feature>
<feature type="turn" evidence="2">
    <location>
        <begin position="111"/>
        <end position="113"/>
    </location>
</feature>
<feature type="turn" evidence="2">
    <location>
        <begin position="118"/>
        <end position="120"/>
    </location>
</feature>
<feature type="strand" evidence="2">
    <location>
        <begin position="139"/>
        <end position="143"/>
    </location>
</feature>
<feature type="strand" evidence="2">
    <location>
        <begin position="149"/>
        <end position="151"/>
    </location>
</feature>
<feature type="helix" evidence="2">
    <location>
        <begin position="152"/>
        <end position="157"/>
    </location>
</feature>
<feature type="strand" evidence="2">
    <location>
        <begin position="164"/>
        <end position="167"/>
    </location>
</feature>
<feature type="helix" evidence="2">
    <location>
        <begin position="169"/>
        <end position="184"/>
    </location>
</feature>
<feature type="helix" evidence="2">
    <location>
        <begin position="186"/>
        <end position="189"/>
    </location>
</feature>
<feature type="strand" evidence="2">
    <location>
        <begin position="193"/>
        <end position="199"/>
    </location>
</feature>
<feature type="strand" evidence="2">
    <location>
        <begin position="201"/>
        <end position="203"/>
    </location>
</feature>
<feature type="strand" evidence="2">
    <location>
        <begin position="206"/>
        <end position="215"/>
    </location>
</feature>
<feature type="strand" evidence="2">
    <location>
        <begin position="218"/>
        <end position="228"/>
    </location>
</feature>
<feature type="strand" evidence="2">
    <location>
        <begin position="232"/>
        <end position="236"/>
    </location>
</feature>
<feature type="helix" evidence="2">
    <location>
        <begin position="243"/>
        <end position="249"/>
    </location>
</feature>
<feature type="helix" evidence="2">
    <location>
        <begin position="264"/>
        <end position="273"/>
    </location>
</feature>
<feature type="helix" evidence="2">
    <location>
        <begin position="280"/>
        <end position="287"/>
    </location>
</feature>
<feature type="helix" evidence="2">
    <location>
        <begin position="290"/>
        <end position="306"/>
    </location>
</feature>
<feature type="strand" evidence="2">
    <location>
        <begin position="312"/>
        <end position="314"/>
    </location>
</feature>
<feature type="strand" evidence="3">
    <location>
        <begin position="316"/>
        <end position="318"/>
    </location>
</feature>
<feature type="strand" evidence="2">
    <location>
        <begin position="321"/>
        <end position="327"/>
    </location>
</feature>
<feature type="strand" evidence="2">
    <location>
        <begin position="332"/>
        <end position="338"/>
    </location>
</feature>
<feature type="helix" evidence="2">
    <location>
        <begin position="350"/>
        <end position="361"/>
    </location>
</feature>
<feature type="turn" evidence="2">
    <location>
        <begin position="366"/>
        <end position="368"/>
    </location>
</feature>
<feature type="strand" evidence="2">
    <location>
        <begin position="373"/>
        <end position="381"/>
    </location>
</feature>
<feature type="helix" evidence="2">
    <location>
        <begin position="382"/>
        <end position="384"/>
    </location>
</feature>
<feature type="helix" evidence="2">
    <location>
        <begin position="387"/>
        <end position="396"/>
    </location>
</feature>
<feature type="helix" evidence="2">
    <location>
        <begin position="398"/>
        <end position="400"/>
    </location>
</feature>
<feature type="strand" evidence="2">
    <location>
        <begin position="401"/>
        <end position="404"/>
    </location>
</feature>
<feature type="strand" evidence="2">
    <location>
        <begin position="407"/>
        <end position="417"/>
    </location>
</feature>
<feature type="helix" evidence="2">
    <location>
        <begin position="422"/>
        <end position="428"/>
    </location>
</feature>
<feature type="helix" evidence="2">
    <location>
        <begin position="432"/>
        <end position="450"/>
    </location>
</feature>
<feature type="helix" evidence="2">
    <location>
        <begin position="460"/>
        <end position="462"/>
    </location>
</feature>
<feature type="strand" evidence="2">
    <location>
        <begin position="463"/>
        <end position="465"/>
    </location>
</feature>
<feature type="strand" evidence="2">
    <location>
        <begin position="471"/>
        <end position="473"/>
    </location>
</feature>
<feature type="helix" evidence="2">
    <location>
        <begin position="476"/>
        <end position="478"/>
    </location>
</feature>
<feature type="strand" evidence="2">
    <location>
        <begin position="480"/>
        <end position="482"/>
    </location>
</feature>
<feature type="helix" evidence="3">
    <location>
        <begin position="496"/>
        <end position="500"/>
    </location>
</feature>
<feature type="helix" evidence="2">
    <location>
        <begin position="517"/>
        <end position="522"/>
    </location>
</feature>
<feature type="turn" evidence="2">
    <location>
        <begin position="526"/>
        <end position="528"/>
    </location>
</feature>
<feature type="helix" evidence="2">
    <location>
        <begin position="529"/>
        <end position="535"/>
    </location>
</feature>
<feature type="helix" evidence="2">
    <location>
        <begin position="537"/>
        <end position="540"/>
    </location>
</feature>
<feature type="helix" evidence="2">
    <location>
        <begin position="542"/>
        <end position="553"/>
    </location>
</feature>
<feature type="helix" evidence="2">
    <location>
        <begin position="565"/>
        <end position="567"/>
    </location>
</feature>
<feature type="helix" evidence="2">
    <location>
        <begin position="569"/>
        <end position="572"/>
    </location>
</feature>
<gene>
    <name evidence="1" type="primary">aceK</name>
    <name type="ordered locus">Z5602</name>
    <name type="ordered locus">ECs4934</name>
</gene>
<sequence length="578" mass="67735">MPRGLELLIAQTILQGFDAQYGRFLEVTSGAQQRFEQADWHAVQQAMKNRIHLYDHHVGLVVEQLRCITNGQSTDAEFLLRVKEHYTRLLPDYPRFEIAESFFNSVYCRLFDHRSLTPERLFIFSSQPERRFRTIPRPLAKDFHPDHGWESLLMRVISDLPLRLHWQNKSRDIHYIIRHLTETLGPENLSKSHLQVANELFYRNKAAWLVGKLITPSGTLPFLLPIHQTDDGELFIDTCLTTTAEASIVFGFARSYFMVYAPLPAALVEWLREILPGKTTAELYMAIGCQKHAKTESYREYLVYLQGCNEQFIEAPGIRGMVMLVFTLPGFDRVFKVIKDKFAPQKEMSAAHVRACYQLVKEHDRVGRMADTQEFENFVLEKRHISPALMELLLQEAAEKITDLGEQIVIRHLYIERRMVPLNIWLEQVEGQQLRDAIEEYGNAIRQLAAANIFPGDMLFKNFGVTRHGRVVFYDYDEICYMTEVNFRDIPPPRYPEDELASEPWYSVSPGDVFPEEFRHWLCADPRIGPLFEEMHADLFRADYWRALQNRIREGHVEDVYAYRRRQRFSVRYGEMLF</sequence>
<reference key="1">
    <citation type="journal article" date="2001" name="Nature">
        <title>Genome sequence of enterohaemorrhagic Escherichia coli O157:H7.</title>
        <authorList>
            <person name="Perna N.T."/>
            <person name="Plunkett G. III"/>
            <person name="Burland V."/>
            <person name="Mau B."/>
            <person name="Glasner J.D."/>
            <person name="Rose D.J."/>
            <person name="Mayhew G.F."/>
            <person name="Evans P.S."/>
            <person name="Gregor J."/>
            <person name="Kirkpatrick H.A."/>
            <person name="Posfai G."/>
            <person name="Hackett J."/>
            <person name="Klink S."/>
            <person name="Boutin A."/>
            <person name="Shao Y."/>
            <person name="Miller L."/>
            <person name="Grotbeck E.J."/>
            <person name="Davis N.W."/>
            <person name="Lim A."/>
            <person name="Dimalanta E.T."/>
            <person name="Potamousis K."/>
            <person name="Apodaca J."/>
            <person name="Anantharaman T.S."/>
            <person name="Lin J."/>
            <person name="Yen G."/>
            <person name="Schwartz D.C."/>
            <person name="Welch R.A."/>
            <person name="Blattner F.R."/>
        </authorList>
    </citation>
    <scope>NUCLEOTIDE SEQUENCE [LARGE SCALE GENOMIC DNA]</scope>
    <source>
        <strain>O157:H7 / EDL933 / ATCC 700927 / EHEC</strain>
    </source>
</reference>
<reference key="2">
    <citation type="journal article" date="2001" name="DNA Res.">
        <title>Complete genome sequence of enterohemorrhagic Escherichia coli O157:H7 and genomic comparison with a laboratory strain K-12.</title>
        <authorList>
            <person name="Hayashi T."/>
            <person name="Makino K."/>
            <person name="Ohnishi M."/>
            <person name="Kurokawa K."/>
            <person name="Ishii K."/>
            <person name="Yokoyama K."/>
            <person name="Han C.-G."/>
            <person name="Ohtsubo E."/>
            <person name="Nakayama K."/>
            <person name="Murata T."/>
            <person name="Tanaka M."/>
            <person name="Tobe T."/>
            <person name="Iida T."/>
            <person name="Takami H."/>
            <person name="Honda T."/>
            <person name="Sasakawa C."/>
            <person name="Ogasawara N."/>
            <person name="Yasunaga T."/>
            <person name="Kuhara S."/>
            <person name="Shiba T."/>
            <person name="Hattori M."/>
            <person name="Shinagawa H."/>
        </authorList>
    </citation>
    <scope>NUCLEOTIDE SEQUENCE [LARGE SCALE GENOMIC DNA]</scope>
    <source>
        <strain>O157:H7 / Sakai / RIMD 0509952 / EHEC</strain>
    </source>
</reference>